<dbReference type="EC" id="3.6.5.3" evidence="2"/>
<dbReference type="EMBL" id="DQ851108">
    <property type="protein sequence ID" value="ABG91405.1"/>
    <property type="molecule type" value="Genomic_DNA"/>
</dbReference>
<dbReference type="RefSeq" id="YP_778573.1">
    <property type="nucleotide sequence ID" value="NC_008408.1"/>
</dbReference>
<dbReference type="SMR" id="Q06J54"/>
<dbReference type="GeneID" id="4352990"/>
<dbReference type="GO" id="GO:0009570">
    <property type="term" value="C:chloroplast stroma"/>
    <property type="evidence" value="ECO:0007669"/>
    <property type="project" value="UniProtKB-SubCell"/>
</dbReference>
<dbReference type="GO" id="GO:0005739">
    <property type="term" value="C:mitochondrion"/>
    <property type="evidence" value="ECO:0007669"/>
    <property type="project" value="TreeGrafter"/>
</dbReference>
<dbReference type="GO" id="GO:0005525">
    <property type="term" value="F:GTP binding"/>
    <property type="evidence" value="ECO:0007669"/>
    <property type="project" value="UniProtKB-UniRule"/>
</dbReference>
<dbReference type="GO" id="GO:0003924">
    <property type="term" value="F:GTPase activity"/>
    <property type="evidence" value="ECO:0007669"/>
    <property type="project" value="InterPro"/>
</dbReference>
<dbReference type="GO" id="GO:0003746">
    <property type="term" value="F:translation elongation factor activity"/>
    <property type="evidence" value="ECO:0007669"/>
    <property type="project" value="UniProtKB-UniRule"/>
</dbReference>
<dbReference type="GO" id="GO:0070125">
    <property type="term" value="P:mitochondrial translational elongation"/>
    <property type="evidence" value="ECO:0007669"/>
    <property type="project" value="TreeGrafter"/>
</dbReference>
<dbReference type="CDD" id="cd01884">
    <property type="entry name" value="EF_Tu"/>
    <property type="match status" value="1"/>
</dbReference>
<dbReference type="CDD" id="cd03697">
    <property type="entry name" value="EFTU_II"/>
    <property type="match status" value="1"/>
</dbReference>
<dbReference type="CDD" id="cd03707">
    <property type="entry name" value="EFTU_III"/>
    <property type="match status" value="1"/>
</dbReference>
<dbReference type="FunFam" id="2.40.30.10:FF:000001">
    <property type="entry name" value="Elongation factor Tu"/>
    <property type="match status" value="1"/>
</dbReference>
<dbReference type="FunFam" id="2.40.30.10:FF:000046">
    <property type="entry name" value="Elongation factor Tu"/>
    <property type="match status" value="1"/>
</dbReference>
<dbReference type="FunFam" id="3.40.50.300:FF:000003">
    <property type="entry name" value="Elongation factor Tu"/>
    <property type="match status" value="1"/>
</dbReference>
<dbReference type="Gene3D" id="3.40.50.300">
    <property type="entry name" value="P-loop containing nucleotide triphosphate hydrolases"/>
    <property type="match status" value="1"/>
</dbReference>
<dbReference type="Gene3D" id="2.40.30.10">
    <property type="entry name" value="Translation factors"/>
    <property type="match status" value="2"/>
</dbReference>
<dbReference type="HAMAP" id="MF_00118_B">
    <property type="entry name" value="EF_Tu_B"/>
    <property type="match status" value="1"/>
</dbReference>
<dbReference type="InterPro" id="IPR041709">
    <property type="entry name" value="EF-Tu_GTP-bd"/>
</dbReference>
<dbReference type="InterPro" id="IPR050055">
    <property type="entry name" value="EF-Tu_GTPase"/>
</dbReference>
<dbReference type="InterPro" id="IPR004161">
    <property type="entry name" value="EFTu-like_2"/>
</dbReference>
<dbReference type="InterPro" id="IPR033720">
    <property type="entry name" value="EFTU_2"/>
</dbReference>
<dbReference type="InterPro" id="IPR031157">
    <property type="entry name" value="G_TR_CS"/>
</dbReference>
<dbReference type="InterPro" id="IPR027417">
    <property type="entry name" value="P-loop_NTPase"/>
</dbReference>
<dbReference type="InterPro" id="IPR005225">
    <property type="entry name" value="Small_GTP-bd"/>
</dbReference>
<dbReference type="InterPro" id="IPR000795">
    <property type="entry name" value="T_Tr_GTP-bd_dom"/>
</dbReference>
<dbReference type="InterPro" id="IPR009000">
    <property type="entry name" value="Transl_B-barrel_sf"/>
</dbReference>
<dbReference type="InterPro" id="IPR009001">
    <property type="entry name" value="Transl_elong_EF1A/Init_IF2_C"/>
</dbReference>
<dbReference type="InterPro" id="IPR004541">
    <property type="entry name" value="Transl_elong_EFTu/EF1A_bac/org"/>
</dbReference>
<dbReference type="InterPro" id="IPR004160">
    <property type="entry name" value="Transl_elong_EFTu/EF1A_C"/>
</dbReference>
<dbReference type="NCBIfam" id="TIGR00485">
    <property type="entry name" value="EF-Tu"/>
    <property type="match status" value="1"/>
</dbReference>
<dbReference type="NCBIfam" id="NF000766">
    <property type="entry name" value="PRK00049.1"/>
    <property type="match status" value="1"/>
</dbReference>
<dbReference type="NCBIfam" id="NF009372">
    <property type="entry name" value="PRK12735.1"/>
    <property type="match status" value="1"/>
</dbReference>
<dbReference type="NCBIfam" id="NF009373">
    <property type="entry name" value="PRK12736.1"/>
    <property type="match status" value="1"/>
</dbReference>
<dbReference type="NCBIfam" id="TIGR00231">
    <property type="entry name" value="small_GTP"/>
    <property type="match status" value="1"/>
</dbReference>
<dbReference type="PANTHER" id="PTHR43721:SF5">
    <property type="entry name" value="ELONGATION FACTOR TU, CHLOROPLASTIC"/>
    <property type="match status" value="1"/>
</dbReference>
<dbReference type="PANTHER" id="PTHR43721">
    <property type="entry name" value="ELONGATION FACTOR TU-RELATED"/>
    <property type="match status" value="1"/>
</dbReference>
<dbReference type="Pfam" id="PF00009">
    <property type="entry name" value="GTP_EFTU"/>
    <property type="match status" value="1"/>
</dbReference>
<dbReference type="Pfam" id="PF03144">
    <property type="entry name" value="GTP_EFTU_D2"/>
    <property type="match status" value="1"/>
</dbReference>
<dbReference type="Pfam" id="PF03143">
    <property type="entry name" value="GTP_EFTU_D3"/>
    <property type="match status" value="1"/>
</dbReference>
<dbReference type="PRINTS" id="PR00315">
    <property type="entry name" value="ELONGATNFCT"/>
</dbReference>
<dbReference type="SUPFAM" id="SSF50465">
    <property type="entry name" value="EF-Tu/eEF-1alpha/eIF2-gamma C-terminal domain"/>
    <property type="match status" value="1"/>
</dbReference>
<dbReference type="SUPFAM" id="SSF52540">
    <property type="entry name" value="P-loop containing nucleoside triphosphate hydrolases"/>
    <property type="match status" value="1"/>
</dbReference>
<dbReference type="SUPFAM" id="SSF50447">
    <property type="entry name" value="Translation proteins"/>
    <property type="match status" value="1"/>
</dbReference>
<dbReference type="PROSITE" id="PS00301">
    <property type="entry name" value="G_TR_1"/>
    <property type="match status" value="1"/>
</dbReference>
<dbReference type="PROSITE" id="PS51722">
    <property type="entry name" value="G_TR_2"/>
    <property type="match status" value="1"/>
</dbReference>
<proteinExistence type="inferred from homology"/>
<accession>Q06J54</accession>
<comment type="function">
    <text evidence="2">GTP hydrolase that promotes the GTP-dependent binding of aminoacyl-tRNA to the A-site of ribosomes during protein biosynthesis.</text>
</comment>
<comment type="catalytic activity">
    <reaction evidence="2">
        <text>GTP + H2O = GDP + phosphate + H(+)</text>
        <dbReference type="Rhea" id="RHEA:19669"/>
        <dbReference type="ChEBI" id="CHEBI:15377"/>
        <dbReference type="ChEBI" id="CHEBI:15378"/>
        <dbReference type="ChEBI" id="CHEBI:37565"/>
        <dbReference type="ChEBI" id="CHEBI:43474"/>
        <dbReference type="ChEBI" id="CHEBI:58189"/>
        <dbReference type="EC" id="3.6.5.3"/>
    </reaction>
    <physiologicalReaction direction="left-to-right" evidence="2">
        <dbReference type="Rhea" id="RHEA:19670"/>
    </physiologicalReaction>
</comment>
<comment type="subcellular location">
    <subcellularLocation>
        <location>Plastid</location>
        <location>Chloroplast stroma</location>
    </subcellularLocation>
</comment>
<comment type="similarity">
    <text evidence="3">Belongs to the TRAFAC class translation factor GTPase superfamily. Classic translation factor GTPase family. EF-Tu/EF-1A subfamily.</text>
</comment>
<protein>
    <recommendedName>
        <fullName>Elongation factor Tu, chloroplastic</fullName>
        <shortName>EF-Tu</shortName>
        <ecNumber evidence="2">3.6.5.3</ecNumber>
    </recommendedName>
</protein>
<gene>
    <name type="primary">tufA</name>
</gene>
<feature type="chain" id="PRO_0000295865" description="Elongation factor Tu, chloroplastic">
    <location>
        <begin position="1"/>
        <end position="410"/>
    </location>
</feature>
<feature type="domain" description="tr-type G">
    <location>
        <begin position="10"/>
        <end position="214"/>
    </location>
</feature>
<feature type="region of interest" description="G1" evidence="1">
    <location>
        <begin position="19"/>
        <end position="26"/>
    </location>
</feature>
<feature type="region of interest" description="G2" evidence="1">
    <location>
        <begin position="60"/>
        <end position="64"/>
    </location>
</feature>
<feature type="region of interest" description="G3" evidence="1">
    <location>
        <begin position="81"/>
        <end position="84"/>
    </location>
</feature>
<feature type="region of interest" description="G4" evidence="1">
    <location>
        <begin position="136"/>
        <end position="139"/>
    </location>
</feature>
<feature type="region of interest" description="G5" evidence="1">
    <location>
        <begin position="174"/>
        <end position="176"/>
    </location>
</feature>
<feature type="binding site" evidence="1">
    <location>
        <begin position="19"/>
        <end position="26"/>
    </location>
    <ligand>
        <name>GTP</name>
        <dbReference type="ChEBI" id="CHEBI:37565"/>
    </ligand>
</feature>
<feature type="binding site" evidence="2">
    <location>
        <position position="26"/>
    </location>
    <ligand>
        <name>Mg(2+)</name>
        <dbReference type="ChEBI" id="CHEBI:18420"/>
    </ligand>
</feature>
<feature type="binding site" evidence="1">
    <location>
        <begin position="81"/>
        <end position="85"/>
    </location>
    <ligand>
        <name>GTP</name>
        <dbReference type="ChEBI" id="CHEBI:37565"/>
    </ligand>
</feature>
<feature type="binding site" evidence="1">
    <location>
        <begin position="136"/>
        <end position="139"/>
    </location>
    <ligand>
        <name>GTP</name>
        <dbReference type="ChEBI" id="CHEBI:37565"/>
    </ligand>
</feature>
<organism>
    <name type="scientific">Bigelowiella natans</name>
    <name type="common">Pedinomonas minutissima</name>
    <name type="synonym">Chlorarachnion sp. (strain CCMP621)</name>
    <dbReference type="NCBI Taxonomy" id="227086"/>
    <lineage>
        <taxon>Eukaryota</taxon>
        <taxon>Sar</taxon>
        <taxon>Rhizaria</taxon>
        <taxon>Cercozoa</taxon>
        <taxon>Chlorarachniophyceae</taxon>
        <taxon>Bigelowiella</taxon>
    </lineage>
</organism>
<keyword id="KW-0150">Chloroplast</keyword>
<keyword id="KW-0251">Elongation factor</keyword>
<keyword id="KW-0342">GTP-binding</keyword>
<keyword id="KW-0378">Hydrolase</keyword>
<keyword id="KW-0460">Magnesium</keyword>
<keyword id="KW-0479">Metal-binding</keyword>
<keyword id="KW-0547">Nucleotide-binding</keyword>
<keyword id="KW-0934">Plastid</keyword>
<keyword id="KW-0648">Protein biosynthesis</keyword>
<evidence type="ECO:0000250" key="1"/>
<evidence type="ECO:0000255" key="2">
    <source>
        <dbReference type="HAMAP-Rule" id="MF_00118"/>
    </source>
</evidence>
<evidence type="ECO:0000305" key="3"/>
<reference key="1">
    <citation type="journal article" date="2007" name="Mol. Biol. Evol.">
        <title>The complete chloroplast genome of the chlorarachniophyte Bigelowiella natans: evidence for independent origins of chlorarachniophyte and euglenid secondary endosymbionts.</title>
        <authorList>
            <person name="Rogers M.B."/>
            <person name="Gilson P.R."/>
            <person name="Su V."/>
            <person name="McFadden G.I."/>
            <person name="Keeling P.J."/>
        </authorList>
    </citation>
    <scope>NUCLEOTIDE SEQUENCE [LARGE SCALE GENOMIC DNA]</scope>
</reference>
<sequence length="410" mass="44921">MAREKFERVKPHVNIGTIGHVDHGKTTLTAAITMALASVSGKKGKKYDDIDSAPEEKARGITINTAHVEYETETRHYAHVDCPGHADYVKNMITGAAQMDGAILVVSGADGPMPQTKEHLLLAKQVGVPSIVVFLNKEDQVDDEELLELVELEIREMLDTYDFPGDSTPIIKGSALMALQALMETDEMSRGSNPWVDKILTLMDNVDEYIPTPERETDKPFLMAVEDVFSITGRGTVATGRVERGGVKIGDVVEIVGLRETRSTTVTGLEMFQKMLQESIAGDNVGMLLRGIQKADIQRGMVVAQPGSITPHVSFDAQVYILTKEEGGRHTPFFKGYRPQFYVRTTDVTGKIESLKSDEDNTEMRMVVPGDRVTMSVELVQPIAIEKGMRFAIREGGRTVGAGVVSNVVS</sequence>
<geneLocation type="chloroplast"/>
<name>EFTU_BIGNA</name>